<reference key="1">
    <citation type="journal article" date="2006" name="Proc. Natl. Acad. Sci. U.S.A.">
        <title>Evolution of sensory complexity recorded in a myxobacterial genome.</title>
        <authorList>
            <person name="Goldman B.S."/>
            <person name="Nierman W.C."/>
            <person name="Kaiser D."/>
            <person name="Slater S.C."/>
            <person name="Durkin A.S."/>
            <person name="Eisen J.A."/>
            <person name="Ronning C.M."/>
            <person name="Barbazuk W.B."/>
            <person name="Blanchard M."/>
            <person name="Field C."/>
            <person name="Halling C."/>
            <person name="Hinkle G."/>
            <person name="Iartchuk O."/>
            <person name="Kim H.S."/>
            <person name="Mackenzie C."/>
            <person name="Madupu R."/>
            <person name="Miller N."/>
            <person name="Shvartsbeyn A."/>
            <person name="Sullivan S.A."/>
            <person name="Vaudin M."/>
            <person name="Wiegand R."/>
            <person name="Kaplan H.B."/>
        </authorList>
    </citation>
    <scope>NUCLEOTIDE SEQUENCE [LARGE SCALE GENOMIC DNA]</scope>
    <source>
        <strain>DK1622</strain>
    </source>
</reference>
<sequence length="314" mass="33952">MRPSSYNQRTLSKIASLQGVGLHSGARVTLTLRPAPPGHGIVFVRTDLARPVSIPALAEYVVDTSLATTLGRDGVRVGTVEHLMAALAGMGIDNLRVELDGPEVPIMDGSAAPFAALIQSAGVREQEAPKELLVIRKAVSVVDGDKQASLTPARHFRISCTIDFEHPVIQGQSFDLDFGDRDFAREISRARTFGFLRDVEKLKQMGLARGGSLENAIVVDEVSILNPDGLRFPDEFVRHKILDAIGDVSLFGRPVIGHMTAYKTGHALNHKLVRKVMSDPSCYEIVPARRRELEGMGLGFSGLAGALDFEPLVA</sequence>
<comment type="function">
    <text evidence="1">Catalyzes the hydrolysis of UDP-3-O-myristoyl-N-acetylglucosamine to form UDP-3-O-myristoylglucosamine and acetate, the committed step in lipid A biosynthesis.</text>
</comment>
<comment type="catalytic activity">
    <reaction evidence="1">
        <text>a UDP-3-O-[(3R)-3-hydroxyacyl]-N-acetyl-alpha-D-glucosamine + H2O = a UDP-3-O-[(3R)-3-hydroxyacyl]-alpha-D-glucosamine + acetate</text>
        <dbReference type="Rhea" id="RHEA:67816"/>
        <dbReference type="ChEBI" id="CHEBI:15377"/>
        <dbReference type="ChEBI" id="CHEBI:30089"/>
        <dbReference type="ChEBI" id="CHEBI:137740"/>
        <dbReference type="ChEBI" id="CHEBI:173225"/>
        <dbReference type="EC" id="3.5.1.108"/>
    </reaction>
</comment>
<comment type="cofactor">
    <cofactor evidence="1">
        <name>Zn(2+)</name>
        <dbReference type="ChEBI" id="CHEBI:29105"/>
    </cofactor>
</comment>
<comment type="pathway">
    <text evidence="1">Glycolipid biosynthesis; lipid IV(A) biosynthesis; lipid IV(A) from (3R)-3-hydroxytetradecanoyl-[acyl-carrier-protein] and UDP-N-acetyl-alpha-D-glucosamine: step 2/6.</text>
</comment>
<comment type="similarity">
    <text evidence="1">Belongs to the LpxC family.</text>
</comment>
<name>LPXC_MYXXD</name>
<evidence type="ECO:0000255" key="1">
    <source>
        <dbReference type="HAMAP-Rule" id="MF_00388"/>
    </source>
</evidence>
<gene>
    <name evidence="1" type="primary">lpxC</name>
    <name type="ordered locus">MXAN_4967</name>
</gene>
<keyword id="KW-0378">Hydrolase</keyword>
<keyword id="KW-0441">Lipid A biosynthesis</keyword>
<keyword id="KW-0444">Lipid biosynthesis</keyword>
<keyword id="KW-0443">Lipid metabolism</keyword>
<keyword id="KW-0479">Metal-binding</keyword>
<keyword id="KW-1185">Reference proteome</keyword>
<keyword id="KW-0862">Zinc</keyword>
<feature type="chain" id="PRO_0000253679" description="UDP-3-O-acyl-N-acetylglucosamine deacetylase">
    <location>
        <begin position="1"/>
        <end position="314"/>
    </location>
</feature>
<feature type="active site" description="Proton donor" evidence="1">
    <location>
        <position position="266"/>
    </location>
</feature>
<feature type="binding site" evidence="1">
    <location>
        <position position="82"/>
    </location>
    <ligand>
        <name>Zn(2+)</name>
        <dbReference type="ChEBI" id="CHEBI:29105"/>
    </ligand>
</feature>
<feature type="binding site" evidence="1">
    <location>
        <position position="239"/>
    </location>
    <ligand>
        <name>Zn(2+)</name>
        <dbReference type="ChEBI" id="CHEBI:29105"/>
    </ligand>
</feature>
<feature type="binding site" evidence="1">
    <location>
        <position position="243"/>
    </location>
    <ligand>
        <name>Zn(2+)</name>
        <dbReference type="ChEBI" id="CHEBI:29105"/>
    </ligand>
</feature>
<protein>
    <recommendedName>
        <fullName evidence="1">UDP-3-O-acyl-N-acetylglucosamine deacetylase</fullName>
        <shortName evidence="1">UDP-3-O-acyl-GlcNAc deacetylase</shortName>
        <ecNumber evidence="1">3.5.1.108</ecNumber>
    </recommendedName>
    <alternativeName>
        <fullName evidence="1">UDP-3-O-[R-3-hydroxymyristoyl]-N-acetylglucosamine deacetylase</fullName>
    </alternativeName>
</protein>
<accession>Q1D2K0</accession>
<proteinExistence type="inferred from homology"/>
<organism>
    <name type="scientific">Myxococcus xanthus (strain DK1622)</name>
    <dbReference type="NCBI Taxonomy" id="246197"/>
    <lineage>
        <taxon>Bacteria</taxon>
        <taxon>Pseudomonadati</taxon>
        <taxon>Myxococcota</taxon>
        <taxon>Myxococcia</taxon>
        <taxon>Myxococcales</taxon>
        <taxon>Cystobacterineae</taxon>
        <taxon>Myxococcaceae</taxon>
        <taxon>Myxococcus</taxon>
    </lineage>
</organism>
<dbReference type="EC" id="3.5.1.108" evidence="1"/>
<dbReference type="EMBL" id="CP000113">
    <property type="protein sequence ID" value="ABF86238.1"/>
    <property type="molecule type" value="Genomic_DNA"/>
</dbReference>
<dbReference type="RefSeq" id="WP_011554945.1">
    <property type="nucleotide sequence ID" value="NC_008095.1"/>
</dbReference>
<dbReference type="SMR" id="Q1D2K0"/>
<dbReference type="STRING" id="246197.MXAN_4967"/>
<dbReference type="EnsemblBacteria" id="ABF86238">
    <property type="protein sequence ID" value="ABF86238"/>
    <property type="gene ID" value="MXAN_4967"/>
</dbReference>
<dbReference type="GeneID" id="41362252"/>
<dbReference type="KEGG" id="mxa:MXAN_4967"/>
<dbReference type="eggNOG" id="COG0774">
    <property type="taxonomic scope" value="Bacteria"/>
</dbReference>
<dbReference type="HOGENOM" id="CLU_046528_1_0_7"/>
<dbReference type="OrthoDB" id="9802746at2"/>
<dbReference type="UniPathway" id="UPA00359">
    <property type="reaction ID" value="UER00478"/>
</dbReference>
<dbReference type="Proteomes" id="UP000002402">
    <property type="component" value="Chromosome"/>
</dbReference>
<dbReference type="GO" id="GO:0016020">
    <property type="term" value="C:membrane"/>
    <property type="evidence" value="ECO:0007669"/>
    <property type="project" value="GOC"/>
</dbReference>
<dbReference type="GO" id="GO:0046872">
    <property type="term" value="F:metal ion binding"/>
    <property type="evidence" value="ECO:0007669"/>
    <property type="project" value="UniProtKB-KW"/>
</dbReference>
<dbReference type="GO" id="GO:0103117">
    <property type="term" value="F:UDP-3-O-acyl-N-acetylglucosamine deacetylase activity"/>
    <property type="evidence" value="ECO:0007669"/>
    <property type="project" value="UniProtKB-UniRule"/>
</dbReference>
<dbReference type="GO" id="GO:0009245">
    <property type="term" value="P:lipid A biosynthetic process"/>
    <property type="evidence" value="ECO:0007669"/>
    <property type="project" value="UniProtKB-UniRule"/>
</dbReference>
<dbReference type="Gene3D" id="3.30.230.20">
    <property type="entry name" value="lpxc deacetylase, domain 1"/>
    <property type="match status" value="1"/>
</dbReference>
<dbReference type="Gene3D" id="3.30.1700.10">
    <property type="entry name" value="lpxc deacetylase, domain 2"/>
    <property type="match status" value="1"/>
</dbReference>
<dbReference type="HAMAP" id="MF_00388">
    <property type="entry name" value="LpxC"/>
    <property type="match status" value="1"/>
</dbReference>
<dbReference type="InterPro" id="IPR020568">
    <property type="entry name" value="Ribosomal_Su5_D2-typ_SF"/>
</dbReference>
<dbReference type="InterPro" id="IPR004463">
    <property type="entry name" value="UDP-acyl_GlcNac_deAcase"/>
</dbReference>
<dbReference type="InterPro" id="IPR011334">
    <property type="entry name" value="UDP-acyl_GlcNac_deAcase_C"/>
</dbReference>
<dbReference type="InterPro" id="IPR015870">
    <property type="entry name" value="UDP-acyl_N-AcGlcN_deAcase_N"/>
</dbReference>
<dbReference type="NCBIfam" id="TIGR00325">
    <property type="entry name" value="lpxC"/>
    <property type="match status" value="1"/>
</dbReference>
<dbReference type="PANTHER" id="PTHR33694">
    <property type="entry name" value="UDP-3-O-ACYL-N-ACETYLGLUCOSAMINE DEACETYLASE 1, MITOCHONDRIAL-RELATED"/>
    <property type="match status" value="1"/>
</dbReference>
<dbReference type="PANTHER" id="PTHR33694:SF1">
    <property type="entry name" value="UDP-3-O-ACYL-N-ACETYLGLUCOSAMINE DEACETYLASE 1, MITOCHONDRIAL-RELATED"/>
    <property type="match status" value="1"/>
</dbReference>
<dbReference type="Pfam" id="PF03331">
    <property type="entry name" value="LpxC"/>
    <property type="match status" value="1"/>
</dbReference>
<dbReference type="SUPFAM" id="SSF54211">
    <property type="entry name" value="Ribosomal protein S5 domain 2-like"/>
    <property type="match status" value="2"/>
</dbReference>